<protein>
    <recommendedName>
        <fullName evidence="1">Peptide chain release factor 1</fullName>
        <shortName evidence="1">RF-1</shortName>
    </recommendedName>
</protein>
<dbReference type="EMBL" id="AP009510">
    <property type="protein sequence ID" value="BAG13667.1"/>
    <property type="molecule type" value="Genomic_DNA"/>
</dbReference>
<dbReference type="SMR" id="B1GZI5"/>
<dbReference type="STRING" id="471821.TGRD_184"/>
<dbReference type="KEGG" id="rsd:TGRD_184"/>
<dbReference type="PATRIC" id="fig|471821.5.peg.272"/>
<dbReference type="HOGENOM" id="CLU_036856_0_1_0"/>
<dbReference type="Proteomes" id="UP000001691">
    <property type="component" value="Chromosome"/>
</dbReference>
<dbReference type="GO" id="GO:0005737">
    <property type="term" value="C:cytoplasm"/>
    <property type="evidence" value="ECO:0007669"/>
    <property type="project" value="UniProtKB-SubCell"/>
</dbReference>
<dbReference type="GO" id="GO:0016149">
    <property type="term" value="F:translation release factor activity, codon specific"/>
    <property type="evidence" value="ECO:0007669"/>
    <property type="project" value="UniProtKB-UniRule"/>
</dbReference>
<dbReference type="FunFam" id="3.30.160.20:FF:000004">
    <property type="entry name" value="Peptide chain release factor 1"/>
    <property type="match status" value="1"/>
</dbReference>
<dbReference type="FunFam" id="3.30.70.1660:FF:000002">
    <property type="entry name" value="Peptide chain release factor 1"/>
    <property type="match status" value="1"/>
</dbReference>
<dbReference type="Gene3D" id="3.30.160.20">
    <property type="match status" value="1"/>
</dbReference>
<dbReference type="Gene3D" id="3.30.70.1660">
    <property type="match status" value="1"/>
</dbReference>
<dbReference type="Gene3D" id="6.10.140.1950">
    <property type="match status" value="1"/>
</dbReference>
<dbReference type="HAMAP" id="MF_00093">
    <property type="entry name" value="Rel_fac_1"/>
    <property type="match status" value="1"/>
</dbReference>
<dbReference type="InterPro" id="IPR005139">
    <property type="entry name" value="PCRF"/>
</dbReference>
<dbReference type="InterPro" id="IPR000352">
    <property type="entry name" value="Pep_chain_release_fac_I"/>
</dbReference>
<dbReference type="InterPro" id="IPR045853">
    <property type="entry name" value="Pep_chain_release_fac_I_sf"/>
</dbReference>
<dbReference type="InterPro" id="IPR050057">
    <property type="entry name" value="Prokaryotic/Mito_RF"/>
</dbReference>
<dbReference type="InterPro" id="IPR004373">
    <property type="entry name" value="RF-1"/>
</dbReference>
<dbReference type="NCBIfam" id="TIGR00019">
    <property type="entry name" value="prfA"/>
    <property type="match status" value="1"/>
</dbReference>
<dbReference type="NCBIfam" id="NF001859">
    <property type="entry name" value="PRK00591.1"/>
    <property type="match status" value="1"/>
</dbReference>
<dbReference type="PANTHER" id="PTHR43804">
    <property type="entry name" value="LD18447P"/>
    <property type="match status" value="1"/>
</dbReference>
<dbReference type="PANTHER" id="PTHR43804:SF7">
    <property type="entry name" value="LD18447P"/>
    <property type="match status" value="1"/>
</dbReference>
<dbReference type="Pfam" id="PF03462">
    <property type="entry name" value="PCRF"/>
    <property type="match status" value="1"/>
</dbReference>
<dbReference type="Pfam" id="PF00472">
    <property type="entry name" value="RF-1"/>
    <property type="match status" value="1"/>
</dbReference>
<dbReference type="SMART" id="SM00937">
    <property type="entry name" value="PCRF"/>
    <property type="match status" value="1"/>
</dbReference>
<dbReference type="SUPFAM" id="SSF75620">
    <property type="entry name" value="Release factor"/>
    <property type="match status" value="1"/>
</dbReference>
<dbReference type="PROSITE" id="PS00745">
    <property type="entry name" value="RF_PROK_I"/>
    <property type="match status" value="1"/>
</dbReference>
<organism>
    <name type="scientific">Endomicrobium trichonymphae</name>
    <dbReference type="NCBI Taxonomy" id="1408204"/>
    <lineage>
        <taxon>Bacteria</taxon>
        <taxon>Pseudomonadati</taxon>
        <taxon>Elusimicrobiota</taxon>
        <taxon>Endomicrobiia</taxon>
        <taxon>Endomicrobiales</taxon>
        <taxon>Endomicrobiaceae</taxon>
        <taxon>Candidatus Endomicrobiellum</taxon>
    </lineage>
</organism>
<accession>B1GZI5</accession>
<sequence length="356" mass="40866">MFLEKLKLLNSIFEEVESKLSDLSVISNQEEYRELTKQHFYLRPLAEKYIRYSKLLNEIKDAEELQKSKDAEMKEIAFAEYNNLIEKRNQMENEIKVLLIPTDPNEDKNIIVEIRAGTGGNEAALFVGDLYGMYTRFAERNGWKYEVLGSNPTGLGGYKEVVFEINGGKVWRCFKFERGAHRVQRVPETEASGRVHTSAATVAVLPEAEEVDVEIKMEDLRIDTYRASGAGGQHINKTDSAIRITHLPTGLVVACQDERSQIKNRAKAFKVLRAKIYEQRILEHEMRLSSERKQQIGSGDRSEKIRTYNFPQNRITDHRIGYSVYNITEVMDGNLSELVNKLIKADIESKLKENNI</sequence>
<reference key="1">
    <citation type="journal article" date="2008" name="Proc. Natl. Acad. Sci. U.S.A.">
        <title>Complete genome of the uncultured termite group 1 bacteria in a single host protist cell.</title>
        <authorList>
            <person name="Hongoh Y."/>
            <person name="Sharma V.K."/>
            <person name="Prakash T."/>
            <person name="Noda S."/>
            <person name="Taylor T.D."/>
            <person name="Kudo T."/>
            <person name="Sakaki Y."/>
            <person name="Toyoda A."/>
            <person name="Hattori M."/>
            <person name="Ohkuma M."/>
        </authorList>
    </citation>
    <scope>NUCLEOTIDE SEQUENCE [LARGE SCALE GENOMIC DNA]</scope>
</reference>
<evidence type="ECO:0000255" key="1">
    <source>
        <dbReference type="HAMAP-Rule" id="MF_00093"/>
    </source>
</evidence>
<proteinExistence type="inferred from homology"/>
<keyword id="KW-0963">Cytoplasm</keyword>
<keyword id="KW-0488">Methylation</keyword>
<keyword id="KW-0648">Protein biosynthesis</keyword>
<comment type="function">
    <text evidence="1">Peptide chain release factor 1 directs the termination of translation in response to the peptide chain termination codons UAG and UAA.</text>
</comment>
<comment type="subcellular location">
    <subcellularLocation>
        <location evidence="1">Cytoplasm</location>
    </subcellularLocation>
</comment>
<comment type="PTM">
    <text evidence="1">Methylated by PrmC. Methylation increases the termination efficiency of RF1.</text>
</comment>
<comment type="similarity">
    <text evidence="1">Belongs to the prokaryotic/mitochondrial release factor family.</text>
</comment>
<name>RF1_ENDTX</name>
<feature type="chain" id="PRO_1000093520" description="Peptide chain release factor 1">
    <location>
        <begin position="1"/>
        <end position="356"/>
    </location>
</feature>
<feature type="modified residue" description="N5-methylglutamine" evidence="1">
    <location>
        <position position="233"/>
    </location>
</feature>
<gene>
    <name evidence="1" type="primary">prfA</name>
    <name type="ordered locus">TGRD_184</name>
</gene>